<accession>O76269</accession>
<proteinExistence type="evidence at protein level"/>
<comment type="function">
    <text evidence="4 5">Sodium-independent nucleoside:H(+) symporter; transports adenosine with high affinity and uridine with moderate affinity (PubMed:12835315, PubMed:9707568). Can transport cytidine and thymidine (PubMed:12835315).</text>
</comment>
<comment type="catalytic activity">
    <reaction evidence="4 5">
        <text>adenosine(in) + H(+)(in) = adenosine(out) + H(+)(out)</text>
        <dbReference type="Rhea" id="RHEA:29987"/>
        <dbReference type="ChEBI" id="CHEBI:15378"/>
        <dbReference type="ChEBI" id="CHEBI:16335"/>
    </reaction>
</comment>
<comment type="catalytic activity">
    <reaction evidence="4 5">
        <text>uridine(in) + H(+)(in) = uridine(out) + H(+)(out)</text>
        <dbReference type="Rhea" id="RHEA:29951"/>
        <dbReference type="ChEBI" id="CHEBI:15378"/>
        <dbReference type="ChEBI" id="CHEBI:16704"/>
    </reaction>
</comment>
<comment type="biophysicochemical properties">
    <kinetics>
        <KM evidence="5">0.66 uM for adenosine</KM>
        <KM evidence="5">40 uM for uridine</KM>
    </kinetics>
</comment>
<comment type="subcellular location">
    <subcellularLocation>
        <location evidence="1">Membrane</location>
        <topology evidence="1">Multi-pass membrane protein</topology>
    </subcellularLocation>
</comment>
<comment type="miscellaneous">
    <text evidence="5">Can transport tubercidin, a toxic adenosine analog.</text>
</comment>
<comment type="similarity">
    <text evidence="1">Belongs to the SLC29A/ENT transporter (TC 2.A.57) family.</text>
</comment>
<feature type="chain" id="PRO_0000462031" description="Nucleoside transporter 1.2">
    <location>
        <begin position="1"/>
        <end position="491" status="greater than"/>
    </location>
</feature>
<feature type="transmembrane region" description="Helical" evidence="1">
    <location>
        <begin position="27"/>
        <end position="47"/>
    </location>
</feature>
<feature type="transmembrane region" description="Helical" evidence="1">
    <location>
        <begin position="82"/>
        <end position="102"/>
    </location>
</feature>
<feature type="transmembrane region" description="Helical" evidence="1">
    <location>
        <begin position="109"/>
        <end position="129"/>
    </location>
</feature>
<feature type="transmembrane region" description="Helical" evidence="1">
    <location>
        <begin position="136"/>
        <end position="156"/>
    </location>
</feature>
<feature type="transmembrane region" description="Helical" evidence="1">
    <location>
        <begin position="173"/>
        <end position="193"/>
    </location>
</feature>
<feature type="transmembrane region" description="Helical" evidence="1">
    <location>
        <begin position="209"/>
        <end position="229"/>
    </location>
</feature>
<feature type="transmembrane region" description="Helical" evidence="1">
    <location>
        <begin position="333"/>
        <end position="353"/>
    </location>
</feature>
<feature type="transmembrane region" description="Helical" evidence="1">
    <location>
        <begin position="361"/>
        <end position="381"/>
    </location>
</feature>
<feature type="transmembrane region" description="Helical" evidence="1">
    <location>
        <begin position="395"/>
        <end position="415"/>
    </location>
</feature>
<feature type="transmembrane region" description="Helical" evidence="1">
    <location>
        <begin position="427"/>
        <end position="447"/>
    </location>
</feature>
<feature type="transmembrane region" description="Helical" evidence="1">
    <location>
        <begin position="460"/>
        <end position="480"/>
    </location>
</feature>
<feature type="region of interest" description="Disordered" evidence="3">
    <location>
        <begin position="261"/>
        <end position="280"/>
    </location>
</feature>
<feature type="region of interest" description="Disordered" evidence="3">
    <location>
        <begin position="290"/>
        <end position="309"/>
    </location>
</feature>
<feature type="compositionally biased region" description="Basic and acidic residues" evidence="3">
    <location>
        <begin position="261"/>
        <end position="273"/>
    </location>
</feature>
<feature type="glycosylation site" description="N-linked (GlcNAc...) asparagine" evidence="2">
    <location>
        <position position="274"/>
    </location>
</feature>
<feature type="non-terminal residue" evidence="9">
    <location>
        <position position="491"/>
    </location>
</feature>
<dbReference type="EMBL" id="AF041473">
    <property type="protein sequence ID" value="AAC32315.1"/>
    <property type="molecule type" value="Genomic_DNA"/>
</dbReference>
<dbReference type="EMBL" id="LR812635">
    <property type="protein sequence ID" value="CAC5428820.1"/>
    <property type="molecule type" value="Genomic_DNA"/>
</dbReference>
<dbReference type="EMBL" id="RHLD01000037">
    <property type="protein sequence ID" value="TPP53189.1"/>
    <property type="molecule type" value="Genomic_DNA"/>
</dbReference>
<dbReference type="VEuPathDB" id="TriTrypDB:LdBPK_151230.1"/>
<dbReference type="VEuPathDB" id="TriTrypDB:LdCL_150017800"/>
<dbReference type="VEuPathDB" id="TriTrypDB:LDHU3_15.1540"/>
<dbReference type="Proteomes" id="UP000318821">
    <property type="component" value="Unassembled WGS sequence"/>
</dbReference>
<dbReference type="Proteomes" id="UP000601710">
    <property type="component" value="Chromosome 15"/>
</dbReference>
<dbReference type="GO" id="GO:0005886">
    <property type="term" value="C:plasma membrane"/>
    <property type="evidence" value="ECO:0007669"/>
    <property type="project" value="TreeGrafter"/>
</dbReference>
<dbReference type="GO" id="GO:0005337">
    <property type="term" value="F:nucleoside transmembrane transporter activity"/>
    <property type="evidence" value="ECO:0007669"/>
    <property type="project" value="InterPro"/>
</dbReference>
<dbReference type="InterPro" id="IPR034764">
    <property type="entry name" value="ENT1/ENT2"/>
</dbReference>
<dbReference type="InterPro" id="IPR002259">
    <property type="entry name" value="Eqnu_transpt"/>
</dbReference>
<dbReference type="NCBIfam" id="TIGR00939">
    <property type="entry name" value="2a57"/>
    <property type="match status" value="1"/>
</dbReference>
<dbReference type="PANTHER" id="PTHR10332">
    <property type="entry name" value="EQUILIBRATIVE NUCLEOSIDE TRANSPORTER"/>
    <property type="match status" value="1"/>
</dbReference>
<dbReference type="PANTHER" id="PTHR10332:SF10">
    <property type="entry name" value="EQUILIBRATIVE NUCLEOSIDE TRANSPORTER 4"/>
    <property type="match status" value="1"/>
</dbReference>
<dbReference type="Pfam" id="PF01733">
    <property type="entry name" value="Nucleoside_tran"/>
    <property type="match status" value="1"/>
</dbReference>
<dbReference type="PRINTS" id="PR01130">
    <property type="entry name" value="DERENTRNSPRT"/>
</dbReference>
<name>NT12_LEIDO</name>
<reference evidence="9" key="1">
    <citation type="journal article" date="1998" name="Proc. Natl. Acad. Sci. U.S.A.">
        <title>Cloning of Leishmania nucleoside transporter genes by rescue of a transport-deficient mutant.</title>
        <authorList>
            <person name="Vasudevan G."/>
            <person name="Carter N.S."/>
            <person name="Drew M.E."/>
            <person name="Beverley S.M."/>
            <person name="Sanchez M.A."/>
            <person name="Seyfang A."/>
            <person name="Ullman B."/>
            <person name="Landfear S.M."/>
        </authorList>
    </citation>
    <scope>NUCLEOTIDE SEQUENCE [GENOMIC DNA]</scope>
    <scope>FUNCTION</scope>
    <scope>TRANSPORTER ACTIVITY</scope>
    <scope>BIOPHYSICOCHEMICAL PROPERTIES</scope>
</reference>
<reference evidence="12" key="2">
    <citation type="submission" date="2019-02" db="EMBL/GenBank/DDBJ databases">
        <title>FDA dAtabase for Regulatory Grade micrObial Sequences (FDA-ARGOS): Supporting development and validation of Infectious Disease Dx tests.</title>
        <authorList>
            <person name="Duncan R."/>
            <person name="Fisher C."/>
            <person name="Tallon L."/>
            <person name="Sadzewicz L."/>
            <person name="Sengamalay N."/>
            <person name="Ott S."/>
            <person name="Godinez A."/>
            <person name="Nagaraj S."/>
            <person name="Vavikolanu K."/>
            <person name="Vyas G."/>
            <person name="Nadendla S."/>
            <person name="Aluvathingal J."/>
            <person name="Sichtig H."/>
        </authorList>
    </citation>
    <scope>NUCLEOTIDE SEQUENCE [LARGE SCALE GENOMIC DNA]</scope>
    <source>
        <strain evidence="12">FDAARGOS_360</strain>
    </source>
</reference>
<reference evidence="10" key="3">
    <citation type="submission" date="2020-06" db="EMBL/GenBank/DDBJ databases">
        <authorList>
            <person name="Camacho E."/>
            <person name="Gonzalez-de la Fuente S."/>
            <person name="Rastrojo A."/>
            <person name="Peiro-Pastor R."/>
            <person name="Solana J.C."/>
            <person name="Tabera L."/>
            <person name="Gamarro F."/>
            <person name="Carrasco-Ramiro F."/>
            <person name="Requena J.M."/>
            <person name="Aguado B."/>
        </authorList>
    </citation>
    <scope>NUCLEOTIDE SEQUENCE [LARGE SCALE GENOMIC DNA]</scope>
</reference>
<reference evidence="8" key="4">
    <citation type="journal article" date="2003" name="J. Biol. Chem.">
        <title>Equilibrative nucleoside transporter family members from Leishmania donovani are electrogenic proton symporters.</title>
        <authorList>
            <person name="Stein A."/>
            <person name="Vaseduvan G."/>
            <person name="Carter N.S."/>
            <person name="Ullman B."/>
            <person name="Landfear S.M."/>
            <person name="Kavanaugh M.P."/>
        </authorList>
    </citation>
    <scope>FUNCTION</scope>
    <scope>TRANSPORTER ACTIVITY</scope>
</reference>
<sequence>MDTAPDHREPQEQGESRKWYEMTASEFYVYVVAFMCGVSMMMSVNAVFSAPAYIMTYYRYAMQDPEAVPLYTNFWNNVMTYYNLIGIVTSLIMEPLTLLSWFRRIPIKVRLLGGLVILIVEIIVLMVVPARGTSEAGAVATICCTGFIGGFGKSIFESTAYGMFGAFPSSFTSTMMGGVGMSGVLTSLLQIIVKAALPDSYEGVKKQSKIYYGLDVGIQGMTFVALILLRFNSFAQNYFGDLGAVKSKVDAGKLSAEALCHTDEHPTHDKEGRNSSSGKEVPALGEVQTAAAKSEGPDAVEESSWPHEVEGPTSNEILVATAIFSTLRRVKWMFVACAFNFLITLFLFPGIAVGMFPDSKWFSTIAVFIFNVFDVLGRFSPSLKLMWPRSYKQRWIIVAASFARVIFVPLLLLHSYHYIPGEAYGYVMEVIFGFSNGYVGSMALVLGPQSKGIDNDGKRFVAGTLMGISILVGGTIGTVLSIMTQTIRERH</sequence>
<gene>
    <name evidence="6" type="primary">NT1.2</name>
    <name evidence="11" type="ORF">CGC20_30425</name>
    <name evidence="10" type="ORF">LDHU3_15.1540</name>
</gene>
<evidence type="ECO:0000255" key="1"/>
<evidence type="ECO:0000255" key="2">
    <source>
        <dbReference type="PROSITE-ProRule" id="PRU00498"/>
    </source>
</evidence>
<evidence type="ECO:0000256" key="3">
    <source>
        <dbReference type="SAM" id="MobiDB-lite"/>
    </source>
</evidence>
<evidence type="ECO:0000269" key="4">
    <source>
    </source>
</evidence>
<evidence type="ECO:0000269" key="5">
    <source>
    </source>
</evidence>
<evidence type="ECO:0000303" key="6">
    <source>
    </source>
</evidence>
<evidence type="ECO:0000303" key="7">
    <source ref="2"/>
</evidence>
<evidence type="ECO:0000305" key="8"/>
<evidence type="ECO:0000312" key="9">
    <source>
        <dbReference type="EMBL" id="AAC32315.1"/>
    </source>
</evidence>
<evidence type="ECO:0000312" key="10">
    <source>
        <dbReference type="EMBL" id="CAC5428820.1"/>
    </source>
</evidence>
<evidence type="ECO:0000312" key="11">
    <source>
        <dbReference type="EMBL" id="TPP53189.1"/>
    </source>
</evidence>
<evidence type="ECO:0000312" key="12">
    <source>
        <dbReference type="Proteomes" id="UP000318821"/>
    </source>
</evidence>
<organism evidence="9">
    <name type="scientific">Leishmania donovani</name>
    <dbReference type="NCBI Taxonomy" id="5661"/>
    <lineage>
        <taxon>Eukaryota</taxon>
        <taxon>Discoba</taxon>
        <taxon>Euglenozoa</taxon>
        <taxon>Kinetoplastea</taxon>
        <taxon>Metakinetoplastina</taxon>
        <taxon>Trypanosomatida</taxon>
        <taxon>Trypanosomatidae</taxon>
        <taxon>Leishmaniinae</taxon>
        <taxon>Leishmania</taxon>
    </lineage>
</organism>
<keyword id="KW-0325">Glycoprotein</keyword>
<keyword id="KW-0472">Membrane</keyword>
<keyword id="KW-0812">Transmembrane</keyword>
<keyword id="KW-1133">Transmembrane helix</keyword>
<keyword id="KW-0813">Transport</keyword>
<protein>
    <recommendedName>
        <fullName evidence="6">Nucleoside transporter 1.2</fullName>
        <shortName evidence="6">LdNT1.2</shortName>
    </recommendedName>
    <alternativeName>
        <fullName evidence="7">Equilibrative nucleoside transporter 1.2</fullName>
    </alternativeName>
</protein>